<protein>
    <recommendedName>
        <fullName evidence="1">Protein GrpE</fullName>
    </recommendedName>
    <alternativeName>
        <fullName evidence="1">HSP-70 cofactor</fullName>
    </alternativeName>
</protein>
<sequence length="216" mass="23223">MTEETPGFEEKPDVPSGATPDDAEPKAADSSEEETAAPAGDLDPTVGLTAQLDQARTALGERTADLQRLQAEYQNYRRRVERDRVTVKEIAVANLLSELLPVLDDVGRARDHGELVGGFKSVAESLETTVAKLGLQQFGKEGEPFDPTIHEALMHSYAPDVTETTCVAILQPGYRIGERTIRPARVAVAEPQPGATPAAAKEEKTDDEESGGTEEV</sequence>
<keyword id="KW-0143">Chaperone</keyword>
<keyword id="KW-0963">Cytoplasm</keyword>
<keyword id="KW-0346">Stress response</keyword>
<dbReference type="EMBL" id="AP009493">
    <property type="protein sequence ID" value="BAG20262.1"/>
    <property type="molecule type" value="Genomic_DNA"/>
</dbReference>
<dbReference type="RefSeq" id="WP_003967577.1">
    <property type="nucleotide sequence ID" value="NC_010572.1"/>
</dbReference>
<dbReference type="SMR" id="B1VMF2"/>
<dbReference type="KEGG" id="sgr:SGR_3433"/>
<dbReference type="eggNOG" id="COG0576">
    <property type="taxonomic scope" value="Bacteria"/>
</dbReference>
<dbReference type="HOGENOM" id="CLU_057217_4_2_11"/>
<dbReference type="Proteomes" id="UP000001685">
    <property type="component" value="Chromosome"/>
</dbReference>
<dbReference type="GO" id="GO:0005737">
    <property type="term" value="C:cytoplasm"/>
    <property type="evidence" value="ECO:0007669"/>
    <property type="project" value="UniProtKB-SubCell"/>
</dbReference>
<dbReference type="GO" id="GO:0000774">
    <property type="term" value="F:adenyl-nucleotide exchange factor activity"/>
    <property type="evidence" value="ECO:0007669"/>
    <property type="project" value="InterPro"/>
</dbReference>
<dbReference type="GO" id="GO:0042803">
    <property type="term" value="F:protein homodimerization activity"/>
    <property type="evidence" value="ECO:0007669"/>
    <property type="project" value="InterPro"/>
</dbReference>
<dbReference type="GO" id="GO:0051087">
    <property type="term" value="F:protein-folding chaperone binding"/>
    <property type="evidence" value="ECO:0007669"/>
    <property type="project" value="InterPro"/>
</dbReference>
<dbReference type="GO" id="GO:0051082">
    <property type="term" value="F:unfolded protein binding"/>
    <property type="evidence" value="ECO:0007669"/>
    <property type="project" value="TreeGrafter"/>
</dbReference>
<dbReference type="GO" id="GO:0006457">
    <property type="term" value="P:protein folding"/>
    <property type="evidence" value="ECO:0007669"/>
    <property type="project" value="InterPro"/>
</dbReference>
<dbReference type="CDD" id="cd00446">
    <property type="entry name" value="GrpE"/>
    <property type="match status" value="1"/>
</dbReference>
<dbReference type="FunFam" id="2.30.22.10:FF:000001">
    <property type="entry name" value="Protein GrpE"/>
    <property type="match status" value="1"/>
</dbReference>
<dbReference type="FunFam" id="3.90.20.20:FF:000010">
    <property type="entry name" value="Protein GrpE"/>
    <property type="match status" value="1"/>
</dbReference>
<dbReference type="Gene3D" id="3.90.20.20">
    <property type="match status" value="1"/>
</dbReference>
<dbReference type="Gene3D" id="2.30.22.10">
    <property type="entry name" value="Head domain of nucleotide exchange factor GrpE"/>
    <property type="match status" value="1"/>
</dbReference>
<dbReference type="HAMAP" id="MF_01151">
    <property type="entry name" value="GrpE"/>
    <property type="match status" value="1"/>
</dbReference>
<dbReference type="InterPro" id="IPR000740">
    <property type="entry name" value="GrpE"/>
</dbReference>
<dbReference type="InterPro" id="IPR013805">
    <property type="entry name" value="GrpE_coiled_coil"/>
</dbReference>
<dbReference type="InterPro" id="IPR009012">
    <property type="entry name" value="GrpE_head"/>
</dbReference>
<dbReference type="NCBIfam" id="NF010760">
    <property type="entry name" value="PRK14163.1"/>
    <property type="match status" value="1"/>
</dbReference>
<dbReference type="PANTHER" id="PTHR21237">
    <property type="entry name" value="GRPE PROTEIN"/>
    <property type="match status" value="1"/>
</dbReference>
<dbReference type="PANTHER" id="PTHR21237:SF23">
    <property type="entry name" value="GRPE PROTEIN HOMOLOG, MITOCHONDRIAL"/>
    <property type="match status" value="1"/>
</dbReference>
<dbReference type="Pfam" id="PF01025">
    <property type="entry name" value="GrpE"/>
    <property type="match status" value="1"/>
</dbReference>
<dbReference type="PRINTS" id="PR00773">
    <property type="entry name" value="GRPEPROTEIN"/>
</dbReference>
<dbReference type="SUPFAM" id="SSF58014">
    <property type="entry name" value="Coiled-coil domain of nucleotide exchange factor GrpE"/>
    <property type="match status" value="1"/>
</dbReference>
<dbReference type="SUPFAM" id="SSF51064">
    <property type="entry name" value="Head domain of nucleotide exchange factor GrpE"/>
    <property type="match status" value="1"/>
</dbReference>
<dbReference type="PROSITE" id="PS01071">
    <property type="entry name" value="GRPE"/>
    <property type="match status" value="1"/>
</dbReference>
<feature type="chain" id="PRO_1000164217" description="Protein GrpE">
    <location>
        <begin position="1"/>
        <end position="216"/>
    </location>
</feature>
<feature type="region of interest" description="Disordered" evidence="2">
    <location>
        <begin position="1"/>
        <end position="45"/>
    </location>
</feature>
<feature type="region of interest" description="Disordered" evidence="2">
    <location>
        <begin position="185"/>
        <end position="216"/>
    </location>
</feature>
<feature type="compositionally biased region" description="Acidic residues" evidence="2">
    <location>
        <begin position="205"/>
        <end position="216"/>
    </location>
</feature>
<organism>
    <name type="scientific">Streptomyces griseus subsp. griseus (strain JCM 4626 / CBS 651.72 / NBRC 13350 / KCC S-0626 / ISP 5235)</name>
    <dbReference type="NCBI Taxonomy" id="455632"/>
    <lineage>
        <taxon>Bacteria</taxon>
        <taxon>Bacillati</taxon>
        <taxon>Actinomycetota</taxon>
        <taxon>Actinomycetes</taxon>
        <taxon>Kitasatosporales</taxon>
        <taxon>Streptomycetaceae</taxon>
        <taxon>Streptomyces</taxon>
    </lineage>
</organism>
<comment type="function">
    <text evidence="1">Participates actively in the response to hyperosmotic and heat shock by preventing the aggregation of stress-denatured proteins, in association with DnaK and GrpE. It is the nucleotide exchange factor for DnaK and may function as a thermosensor. Unfolded proteins bind initially to DnaJ; upon interaction with the DnaJ-bound protein, DnaK hydrolyzes its bound ATP, resulting in the formation of a stable complex. GrpE releases ADP from DnaK; ATP binding to DnaK triggers the release of the substrate protein, thus completing the reaction cycle. Several rounds of ATP-dependent interactions between DnaJ, DnaK and GrpE are required for fully efficient folding.</text>
</comment>
<comment type="subunit">
    <text evidence="1">Homodimer.</text>
</comment>
<comment type="subcellular location">
    <subcellularLocation>
        <location evidence="1">Cytoplasm</location>
    </subcellularLocation>
</comment>
<comment type="similarity">
    <text evidence="1">Belongs to the GrpE family.</text>
</comment>
<evidence type="ECO:0000255" key="1">
    <source>
        <dbReference type="HAMAP-Rule" id="MF_01151"/>
    </source>
</evidence>
<evidence type="ECO:0000256" key="2">
    <source>
        <dbReference type="SAM" id="MobiDB-lite"/>
    </source>
</evidence>
<gene>
    <name evidence="1" type="primary">grpE</name>
    <name type="ordered locus">SGR_3433</name>
</gene>
<proteinExistence type="inferred from homology"/>
<accession>B1VMF2</accession>
<name>GRPE_STRGG</name>
<reference key="1">
    <citation type="journal article" date="2008" name="J. Bacteriol.">
        <title>Genome sequence of the streptomycin-producing microorganism Streptomyces griseus IFO 13350.</title>
        <authorList>
            <person name="Ohnishi Y."/>
            <person name="Ishikawa J."/>
            <person name="Hara H."/>
            <person name="Suzuki H."/>
            <person name="Ikenoya M."/>
            <person name="Ikeda H."/>
            <person name="Yamashita A."/>
            <person name="Hattori M."/>
            <person name="Horinouchi S."/>
        </authorList>
    </citation>
    <scope>NUCLEOTIDE SEQUENCE [LARGE SCALE GENOMIC DNA]</scope>
    <source>
        <strain>JCM 4626 / CBS 651.72 / NBRC 13350 / KCC S-0626 / ISP 5235</strain>
    </source>
</reference>